<sequence>MEALVCAFSELHIREDAVSQAQGRPGHPDAPPNIYEGGLGSPQPQCPSAQGSKPKNFRLRHLRGLGLYLESHPPPTGQCESHWLGRLMAGGCLPQPEGTAWALDLPQGTLGPRNSLCSALLEARLPRDSLGSSASSSSMDPDKGALPQPSPSRLRPKRSWGTWEEAMCPLCKRTRSGALERP</sequence>
<evidence type="ECO:0000256" key="1">
    <source>
        <dbReference type="SAM" id="MobiDB-lite"/>
    </source>
</evidence>
<evidence type="ECO:0000305" key="2"/>
<proteinExistence type="evidence at transcript level"/>
<protein>
    <recommendedName>
        <fullName>Uncharacterized protein C16orf90</fullName>
    </recommendedName>
</protein>
<keyword id="KW-1185">Reference proteome</keyword>
<gene>
    <name type="primary">C16orf90</name>
</gene>
<feature type="chain" id="PRO_0000343581" description="Uncharacterized protein C16orf90">
    <location>
        <begin position="1"/>
        <end position="182"/>
    </location>
</feature>
<feature type="region of interest" description="Disordered" evidence="1">
    <location>
        <begin position="17"/>
        <end position="53"/>
    </location>
</feature>
<feature type="region of interest" description="Disordered" evidence="1">
    <location>
        <begin position="128"/>
        <end position="159"/>
    </location>
</feature>
<feature type="compositionally biased region" description="Polar residues" evidence="1">
    <location>
        <begin position="42"/>
        <end position="53"/>
    </location>
</feature>
<feature type="compositionally biased region" description="Low complexity" evidence="1">
    <location>
        <begin position="129"/>
        <end position="138"/>
    </location>
</feature>
<feature type="sequence conflict" description="In Ref. 2; DR731281." evidence="2" ref="2">
    <original>D</original>
    <variation>V</variation>
    <location>
        <position position="29"/>
    </location>
</feature>
<feature type="sequence conflict" description="In Ref. 2; DR731281." evidence="2" ref="2">
    <original>S</original>
    <variation>R</variation>
    <location>
        <position position="133"/>
    </location>
</feature>
<accession>A8MZG2</accession>
<dbReference type="EMBL" id="AC004224">
    <property type="status" value="NOT_ANNOTATED_CDS"/>
    <property type="molecule type" value="Genomic_DNA"/>
</dbReference>
<dbReference type="EMBL" id="DR731281">
    <property type="status" value="NOT_ANNOTATED_CDS"/>
    <property type="molecule type" value="mRNA"/>
</dbReference>
<dbReference type="CCDS" id="CCDS45397.1"/>
<dbReference type="RefSeq" id="NP_001073993.1">
    <property type="nucleotide sequence ID" value="NM_001080524.2"/>
</dbReference>
<dbReference type="BioGRID" id="571081">
    <property type="interactions" value="2"/>
</dbReference>
<dbReference type="FunCoup" id="A8MZG2">
    <property type="interactions" value="1"/>
</dbReference>
<dbReference type="STRING" id="9606.ENSP00000401335"/>
<dbReference type="BioMuta" id="C16orf90"/>
<dbReference type="PaxDb" id="9606-ENSP00000401335"/>
<dbReference type="Antibodypedia" id="71412">
    <property type="antibodies" value="10 antibodies from 5 providers"/>
</dbReference>
<dbReference type="DNASU" id="646174"/>
<dbReference type="Ensembl" id="ENST00000437192.8">
    <property type="protein sequence ID" value="ENSP00000401335.3"/>
    <property type="gene ID" value="ENSG00000215131.11"/>
</dbReference>
<dbReference type="GeneID" id="646174"/>
<dbReference type="KEGG" id="hsa:646174"/>
<dbReference type="MANE-Select" id="ENST00000437192.8">
    <property type="protein sequence ID" value="ENSP00000401335.3"/>
    <property type="RefSeq nucleotide sequence ID" value="NM_001080524.2"/>
    <property type="RefSeq protein sequence ID" value="NP_001073993.1"/>
</dbReference>
<dbReference type="UCSC" id="uc002cvi.4">
    <property type="organism name" value="human"/>
</dbReference>
<dbReference type="AGR" id="HGNC:34455"/>
<dbReference type="CTD" id="646174"/>
<dbReference type="DisGeNET" id="646174"/>
<dbReference type="GeneCards" id="C16orf90"/>
<dbReference type="HGNC" id="HGNC:34455">
    <property type="gene designation" value="C16orf90"/>
</dbReference>
<dbReference type="HPA" id="ENSG00000215131">
    <property type="expression patterns" value="Tissue enriched (testis)"/>
</dbReference>
<dbReference type="neXtProt" id="NX_A8MZG2"/>
<dbReference type="VEuPathDB" id="HostDB:ENSG00000215131"/>
<dbReference type="eggNOG" id="ENOG502SU94">
    <property type="taxonomic scope" value="Eukaryota"/>
</dbReference>
<dbReference type="GeneTree" id="ENSGT00390000014875"/>
<dbReference type="HOGENOM" id="CLU_125529_0_0_1"/>
<dbReference type="InParanoid" id="A8MZG2"/>
<dbReference type="OMA" id="MCKRTRP"/>
<dbReference type="OrthoDB" id="9829229at2759"/>
<dbReference type="PAN-GO" id="A8MZG2">
    <property type="GO annotations" value="0 GO annotations based on evolutionary models"/>
</dbReference>
<dbReference type="PhylomeDB" id="A8MZG2"/>
<dbReference type="TreeFam" id="TF337958"/>
<dbReference type="PathwayCommons" id="A8MZG2"/>
<dbReference type="SignaLink" id="A8MZG2"/>
<dbReference type="BioGRID-ORCS" id="646174">
    <property type="hits" value="20 hits in 1109 CRISPR screens"/>
</dbReference>
<dbReference type="ChiTaRS" id="C16orf90">
    <property type="organism name" value="human"/>
</dbReference>
<dbReference type="GenomeRNAi" id="646174"/>
<dbReference type="Pharos" id="A8MZG2">
    <property type="development level" value="Tdark"/>
</dbReference>
<dbReference type="PRO" id="PR:A8MZG2"/>
<dbReference type="Proteomes" id="UP000005640">
    <property type="component" value="Chromosome 16"/>
</dbReference>
<dbReference type="RNAct" id="A8MZG2">
    <property type="molecule type" value="protein"/>
</dbReference>
<dbReference type="Bgee" id="ENSG00000215131">
    <property type="expression patterns" value="Expressed in left testis and 17 other cell types or tissues"/>
</dbReference>
<dbReference type="ExpressionAtlas" id="A8MZG2">
    <property type="expression patterns" value="baseline and differential"/>
</dbReference>
<dbReference type="InterPro" id="IPR027978">
    <property type="entry name" value="DUF4644"/>
</dbReference>
<dbReference type="PANTHER" id="PTHR37334">
    <property type="entry name" value="RGD1561796"/>
    <property type="match status" value="1"/>
</dbReference>
<dbReference type="PANTHER" id="PTHR37334:SF1">
    <property type="entry name" value="RGD1561796"/>
    <property type="match status" value="1"/>
</dbReference>
<dbReference type="Pfam" id="PF15486">
    <property type="entry name" value="DUF4644"/>
    <property type="match status" value="1"/>
</dbReference>
<name>CP090_HUMAN</name>
<reference key="1">
    <citation type="journal article" date="2004" name="Nature">
        <title>The sequence and analysis of duplication-rich human chromosome 16.</title>
        <authorList>
            <person name="Martin J."/>
            <person name="Han C."/>
            <person name="Gordon L.A."/>
            <person name="Terry A."/>
            <person name="Prabhakar S."/>
            <person name="She X."/>
            <person name="Xie G."/>
            <person name="Hellsten U."/>
            <person name="Chan Y.M."/>
            <person name="Altherr M."/>
            <person name="Couronne O."/>
            <person name="Aerts A."/>
            <person name="Bajorek E."/>
            <person name="Black S."/>
            <person name="Blumer H."/>
            <person name="Branscomb E."/>
            <person name="Brown N.C."/>
            <person name="Bruno W.J."/>
            <person name="Buckingham J.M."/>
            <person name="Callen D.F."/>
            <person name="Campbell C.S."/>
            <person name="Campbell M.L."/>
            <person name="Campbell E.W."/>
            <person name="Caoile C."/>
            <person name="Challacombe J.F."/>
            <person name="Chasteen L.A."/>
            <person name="Chertkov O."/>
            <person name="Chi H.C."/>
            <person name="Christensen M."/>
            <person name="Clark L.M."/>
            <person name="Cohn J.D."/>
            <person name="Denys M."/>
            <person name="Detter J.C."/>
            <person name="Dickson M."/>
            <person name="Dimitrijevic-Bussod M."/>
            <person name="Escobar J."/>
            <person name="Fawcett J.J."/>
            <person name="Flowers D."/>
            <person name="Fotopulos D."/>
            <person name="Glavina T."/>
            <person name="Gomez M."/>
            <person name="Gonzales E."/>
            <person name="Goodstein D."/>
            <person name="Goodwin L.A."/>
            <person name="Grady D.L."/>
            <person name="Grigoriev I."/>
            <person name="Groza M."/>
            <person name="Hammon N."/>
            <person name="Hawkins T."/>
            <person name="Haydu L."/>
            <person name="Hildebrand C.E."/>
            <person name="Huang W."/>
            <person name="Israni S."/>
            <person name="Jett J."/>
            <person name="Jewett P.B."/>
            <person name="Kadner K."/>
            <person name="Kimball H."/>
            <person name="Kobayashi A."/>
            <person name="Krawczyk M.-C."/>
            <person name="Leyba T."/>
            <person name="Longmire J.L."/>
            <person name="Lopez F."/>
            <person name="Lou Y."/>
            <person name="Lowry S."/>
            <person name="Ludeman T."/>
            <person name="Manohar C.F."/>
            <person name="Mark G.A."/>
            <person name="McMurray K.L."/>
            <person name="Meincke L.J."/>
            <person name="Morgan J."/>
            <person name="Moyzis R.K."/>
            <person name="Mundt M.O."/>
            <person name="Munk A.C."/>
            <person name="Nandkeshwar R.D."/>
            <person name="Pitluck S."/>
            <person name="Pollard M."/>
            <person name="Predki P."/>
            <person name="Parson-Quintana B."/>
            <person name="Ramirez L."/>
            <person name="Rash S."/>
            <person name="Retterer J."/>
            <person name="Ricke D.O."/>
            <person name="Robinson D.L."/>
            <person name="Rodriguez A."/>
            <person name="Salamov A."/>
            <person name="Saunders E.H."/>
            <person name="Scott D."/>
            <person name="Shough T."/>
            <person name="Stallings R.L."/>
            <person name="Stalvey M."/>
            <person name="Sutherland R.D."/>
            <person name="Tapia R."/>
            <person name="Tesmer J.G."/>
            <person name="Thayer N."/>
            <person name="Thompson L.S."/>
            <person name="Tice H."/>
            <person name="Torney D.C."/>
            <person name="Tran-Gyamfi M."/>
            <person name="Tsai M."/>
            <person name="Ulanovsky L.E."/>
            <person name="Ustaszewska A."/>
            <person name="Vo N."/>
            <person name="White P.S."/>
            <person name="Williams A.L."/>
            <person name="Wills P.L."/>
            <person name="Wu J.-R."/>
            <person name="Wu K."/>
            <person name="Yang J."/>
            <person name="DeJong P."/>
            <person name="Bruce D."/>
            <person name="Doggett N.A."/>
            <person name="Deaven L."/>
            <person name="Schmutz J."/>
            <person name="Grimwood J."/>
            <person name="Richardson P."/>
            <person name="Rokhsar D.S."/>
            <person name="Eichler E.E."/>
            <person name="Gilna P."/>
            <person name="Lucas S.M."/>
            <person name="Myers R.M."/>
            <person name="Rubin E.M."/>
            <person name="Pennacchio L.A."/>
        </authorList>
    </citation>
    <scope>NUCLEOTIDE SEQUENCE [LARGE SCALE GENOMIC DNA]</scope>
</reference>
<reference key="2">
    <citation type="journal article" date="2004" name="Genome Res.">
        <title>The status, quality, and expansion of the NIH full-length cDNA project: the Mammalian Gene Collection (MGC).</title>
        <authorList>
            <consortium name="The MGC Project Team"/>
        </authorList>
    </citation>
    <scope>NUCLEOTIDE SEQUENCE [LARGE SCALE MRNA] OF 4-147</scope>
</reference>
<organism>
    <name type="scientific">Homo sapiens</name>
    <name type="common">Human</name>
    <dbReference type="NCBI Taxonomy" id="9606"/>
    <lineage>
        <taxon>Eukaryota</taxon>
        <taxon>Metazoa</taxon>
        <taxon>Chordata</taxon>
        <taxon>Craniata</taxon>
        <taxon>Vertebrata</taxon>
        <taxon>Euteleostomi</taxon>
        <taxon>Mammalia</taxon>
        <taxon>Eutheria</taxon>
        <taxon>Euarchontoglires</taxon>
        <taxon>Primates</taxon>
        <taxon>Haplorrhini</taxon>
        <taxon>Catarrhini</taxon>
        <taxon>Hominidae</taxon>
        <taxon>Homo</taxon>
    </lineage>
</organism>